<gene>
    <name evidence="1" type="primary">cue</name>
    <name type="ORF">GA11386</name>
</gene>
<reference evidence="5" key="1">
    <citation type="journal article" date="2005" name="Genome Res.">
        <title>Comparative genome sequencing of Drosophila pseudoobscura: chromosomal, gene, and cis-element evolution.</title>
        <authorList>
            <person name="Richards S."/>
            <person name="Liu Y."/>
            <person name="Bettencourt B.R."/>
            <person name="Hradecky P."/>
            <person name="Letovsky S."/>
            <person name="Nielsen R."/>
            <person name="Thornton K."/>
            <person name="Hubisz M.J."/>
            <person name="Chen R."/>
            <person name="Meisel R.P."/>
            <person name="Couronne O."/>
            <person name="Hua S."/>
            <person name="Smith M.A."/>
            <person name="Zhang P."/>
            <person name="Liu J."/>
            <person name="Bussemaker H.J."/>
            <person name="van Batenburg M.F."/>
            <person name="Howells S.L."/>
            <person name="Scherer S.E."/>
            <person name="Sodergren E."/>
            <person name="Matthews B.B."/>
            <person name="Crosby M.A."/>
            <person name="Schroeder A.J."/>
            <person name="Ortiz-Barrientos D."/>
            <person name="Rives C.M."/>
            <person name="Metzker M.L."/>
            <person name="Muzny D.M."/>
            <person name="Scott G."/>
            <person name="Steffen D."/>
            <person name="Wheeler D.A."/>
            <person name="Worley K.C."/>
            <person name="Havlak P."/>
            <person name="Durbin K.J."/>
            <person name="Egan A."/>
            <person name="Gill R."/>
            <person name="Hume J."/>
            <person name="Morgan M.B."/>
            <person name="Miner G."/>
            <person name="Hamilton C."/>
            <person name="Huang Y."/>
            <person name="Waldron L."/>
            <person name="Verduzco D."/>
            <person name="Clerc-Blankenburg K.P."/>
            <person name="Dubchak I."/>
            <person name="Noor M.A.F."/>
            <person name="Anderson W."/>
            <person name="White K.P."/>
            <person name="Clark A.G."/>
            <person name="Schaeffer S.W."/>
            <person name="Gelbart W.M."/>
            <person name="Weinstock G.M."/>
            <person name="Gibbs R.A."/>
        </authorList>
    </citation>
    <scope>NUCLEOTIDE SEQUENCE [LARGE SCALE GENOMIC DNA]</scope>
    <source>
        <strain>MV2-25 / Tucson 14011-0121.94</strain>
    </source>
</reference>
<accession>Q29FE9</accession>
<protein>
    <recommendedName>
        <fullName evidence="1">Protein cueball</fullName>
    </recommendedName>
</protein>
<evidence type="ECO:0000250" key="1">
    <source>
        <dbReference type="UniProtKB" id="Q95RU0"/>
    </source>
</evidence>
<evidence type="ECO:0000255" key="2"/>
<evidence type="ECO:0000255" key="3">
    <source>
        <dbReference type="PROSITE-ProRule" id="PRU00076"/>
    </source>
</evidence>
<evidence type="ECO:0000305" key="4"/>
<evidence type="ECO:0000312" key="5">
    <source>
        <dbReference type="EMBL" id="EAL31306.2"/>
    </source>
</evidence>
<organism>
    <name type="scientific">Drosophila pseudoobscura pseudoobscura</name>
    <name type="common">Fruit fly</name>
    <dbReference type="NCBI Taxonomy" id="46245"/>
    <lineage>
        <taxon>Eukaryota</taxon>
        <taxon>Metazoa</taxon>
        <taxon>Ecdysozoa</taxon>
        <taxon>Arthropoda</taxon>
        <taxon>Hexapoda</taxon>
        <taxon>Insecta</taxon>
        <taxon>Pterygota</taxon>
        <taxon>Neoptera</taxon>
        <taxon>Endopterygota</taxon>
        <taxon>Diptera</taxon>
        <taxon>Brachycera</taxon>
        <taxon>Muscomorpha</taxon>
        <taxon>Ephydroidea</taxon>
        <taxon>Drosophilidae</taxon>
        <taxon>Drosophila</taxon>
        <taxon>Sophophora</taxon>
    </lineage>
</organism>
<comment type="function">
    <text evidence="1">Has a role in spermatogenesis and oogenesis.</text>
</comment>
<comment type="subcellular location">
    <subcellularLocation>
        <location evidence="4">Cell membrane</location>
        <topology evidence="4">Single-pass type I membrane protein</topology>
    </subcellularLocation>
</comment>
<comment type="similarity">
    <text evidence="4">Belongs to the cueball family.</text>
</comment>
<sequence>MLWCPSVLVPLIAVAACLPVLAIGTPLEWEFAITLKSKILFVDEFWRTLASAAHEFDELSALTFDETEELIYFNDQQHRNGSIFSLRRDALMASHIAEQAIQRTGNESVGGLAYDPLNRNLFWSDTLQKKIFFASIDSKVTETPKVLVDLSQEGARPDGVAVDVCRRKLYWTNSNITHPTVESIDLAGTNRQVIIDTDIDMPRGIVVDQLSDRIFWIDDLKGVFFALKSARLDGSDRQLVLHDKHHEPLNLAVTNDAIYWTDKTTKAVWSHPKVPIVKATTTTSPLKAEEEDATETIPDIEPEPVAEVSALLRVANLSEEARGIVARTGFYQRLQKDEHCANIVRKVKERLDLMTKKKQMRSLVDEKTAQLERDHCLNGGTYIADRVLCICPTGFKGSRCEIRECHNFCVHGTCEISDRAYPKCYCQPGFSGERCEISKCSGLCLNGGHCKLEDISEKPSCECPHNFAGERCEQNSTEICALFCRLLKHEADIYVPFGCHDICEELAKDASDKIAIPQYHHLEVCMTPSPWTSNVIIVLVLGIVSCFFLVAVIVHGFRRLYKPKRPRIRKTFVVRKQARTNSSGDTPLTNRPLATEQCEITIENCCNMNICETPCFDPKLVEQTLAKSSNCKEDKKILIHNMDDDLY</sequence>
<dbReference type="EMBL" id="CH379067">
    <property type="protein sequence ID" value="EAL31306.2"/>
    <property type="molecule type" value="Genomic_DNA"/>
</dbReference>
<dbReference type="RefSeq" id="XP_001354253.2">
    <property type="nucleotide sequence ID" value="XM_001354217.3"/>
</dbReference>
<dbReference type="SMR" id="Q29FE9"/>
<dbReference type="FunCoup" id="Q29FE9">
    <property type="interactions" value="167"/>
</dbReference>
<dbReference type="GlyCosmos" id="Q29FE9">
    <property type="glycosylation" value="5 sites, No reported glycans"/>
</dbReference>
<dbReference type="EnsemblMetazoa" id="FBtr0278382">
    <property type="protein sequence ID" value="FBpp0276820"/>
    <property type="gene ID" value="FBgn0071440"/>
</dbReference>
<dbReference type="GeneID" id="4814131"/>
<dbReference type="KEGG" id="dpo:4814131"/>
<dbReference type="CTD" id="38174"/>
<dbReference type="eggNOG" id="KOG1215">
    <property type="taxonomic scope" value="Eukaryota"/>
</dbReference>
<dbReference type="HOGENOM" id="CLU_026602_0_0_1"/>
<dbReference type="InParanoid" id="Q29FE9"/>
<dbReference type="OMA" id="RCEQNST"/>
<dbReference type="Proteomes" id="UP000001819">
    <property type="component" value="Chromosome X"/>
</dbReference>
<dbReference type="Bgee" id="FBgn0071440">
    <property type="expression patterns" value="Expressed in adult organism and 3 other cell types or tissues"/>
</dbReference>
<dbReference type="GO" id="GO:0005886">
    <property type="term" value="C:plasma membrane"/>
    <property type="evidence" value="ECO:0007669"/>
    <property type="project" value="UniProtKB-SubCell"/>
</dbReference>
<dbReference type="GO" id="GO:0042813">
    <property type="term" value="F:Wnt receptor activity"/>
    <property type="evidence" value="ECO:0007669"/>
    <property type="project" value="TreeGrafter"/>
</dbReference>
<dbReference type="GO" id="GO:0017147">
    <property type="term" value="F:Wnt-protein binding"/>
    <property type="evidence" value="ECO:0007669"/>
    <property type="project" value="TreeGrafter"/>
</dbReference>
<dbReference type="GO" id="GO:0060070">
    <property type="term" value="P:canonical Wnt signaling pathway"/>
    <property type="evidence" value="ECO:0007669"/>
    <property type="project" value="TreeGrafter"/>
</dbReference>
<dbReference type="GO" id="GO:0048477">
    <property type="term" value="P:oogenesis"/>
    <property type="evidence" value="ECO:0007669"/>
    <property type="project" value="UniProtKB-KW"/>
</dbReference>
<dbReference type="GO" id="GO:0007283">
    <property type="term" value="P:spermatogenesis"/>
    <property type="evidence" value="ECO:0007669"/>
    <property type="project" value="UniProtKB-KW"/>
</dbReference>
<dbReference type="Gene3D" id="2.10.25.10">
    <property type="entry name" value="Laminin"/>
    <property type="match status" value="3"/>
</dbReference>
<dbReference type="Gene3D" id="2.120.10.30">
    <property type="entry name" value="TolB, C-terminal domain"/>
    <property type="match status" value="1"/>
</dbReference>
<dbReference type="InterPro" id="IPR011042">
    <property type="entry name" value="6-blade_b-propeller_TolB-like"/>
</dbReference>
<dbReference type="InterPro" id="IPR050778">
    <property type="entry name" value="Cueball_EGF_LRP_Nidogen"/>
</dbReference>
<dbReference type="InterPro" id="IPR000742">
    <property type="entry name" value="EGF-like_dom"/>
</dbReference>
<dbReference type="InterPro" id="IPR000033">
    <property type="entry name" value="LDLR_classB_rpt"/>
</dbReference>
<dbReference type="PANTHER" id="PTHR46513:SF42">
    <property type="entry name" value="PROTEIN CUEBALL"/>
    <property type="match status" value="1"/>
</dbReference>
<dbReference type="PANTHER" id="PTHR46513">
    <property type="entry name" value="VITELLOGENIN RECEPTOR-LIKE PROTEIN-RELATED-RELATED"/>
    <property type="match status" value="1"/>
</dbReference>
<dbReference type="Pfam" id="PF00058">
    <property type="entry name" value="Ldl_recept_b"/>
    <property type="match status" value="1"/>
</dbReference>
<dbReference type="SMART" id="SM00181">
    <property type="entry name" value="EGF"/>
    <property type="match status" value="3"/>
</dbReference>
<dbReference type="SMART" id="SM00135">
    <property type="entry name" value="LY"/>
    <property type="match status" value="4"/>
</dbReference>
<dbReference type="SUPFAM" id="SSF57196">
    <property type="entry name" value="EGF/Laminin"/>
    <property type="match status" value="3"/>
</dbReference>
<dbReference type="SUPFAM" id="SSF63825">
    <property type="entry name" value="YWTD domain"/>
    <property type="match status" value="1"/>
</dbReference>
<dbReference type="PROSITE" id="PS00022">
    <property type="entry name" value="EGF_1"/>
    <property type="match status" value="3"/>
</dbReference>
<dbReference type="PROSITE" id="PS01186">
    <property type="entry name" value="EGF_2"/>
    <property type="match status" value="2"/>
</dbReference>
<dbReference type="PROSITE" id="PS50026">
    <property type="entry name" value="EGF_3"/>
    <property type="match status" value="2"/>
</dbReference>
<dbReference type="PROSITE" id="PS51120">
    <property type="entry name" value="LDLRB"/>
    <property type="match status" value="3"/>
</dbReference>
<proteinExistence type="inferred from homology"/>
<name>CUE_DROPS</name>
<keyword id="KW-1003">Cell membrane</keyword>
<keyword id="KW-0221">Differentiation</keyword>
<keyword id="KW-1015">Disulfide bond</keyword>
<keyword id="KW-0245">EGF-like domain</keyword>
<keyword id="KW-0325">Glycoprotein</keyword>
<keyword id="KW-0472">Membrane</keyword>
<keyword id="KW-0896">Oogenesis</keyword>
<keyword id="KW-1185">Reference proteome</keyword>
<keyword id="KW-0677">Repeat</keyword>
<keyword id="KW-0732">Signal</keyword>
<keyword id="KW-0744">Spermatogenesis</keyword>
<keyword id="KW-0812">Transmembrane</keyword>
<keyword id="KW-1133">Transmembrane helix</keyword>
<feature type="signal peptide" evidence="2">
    <location>
        <begin position="1"/>
        <end position="22"/>
    </location>
</feature>
<feature type="chain" id="PRO_0000386575" description="Protein cueball" evidence="2">
    <location>
        <begin position="23"/>
        <end position="647"/>
    </location>
</feature>
<feature type="topological domain" description="Extracellular" evidence="2">
    <location>
        <begin position="23"/>
        <end position="534"/>
    </location>
</feature>
<feature type="transmembrane region" description="Helical" evidence="2">
    <location>
        <begin position="535"/>
        <end position="555"/>
    </location>
</feature>
<feature type="topological domain" description="Cytoplasmic" evidence="2">
    <location>
        <begin position="556"/>
        <end position="647"/>
    </location>
</feature>
<feature type="repeat" description="LDL-receptor class B 1" evidence="2">
    <location>
        <begin position="119"/>
        <end position="166"/>
    </location>
</feature>
<feature type="repeat" description="LDL-receptor class B 2" evidence="2">
    <location>
        <begin position="167"/>
        <end position="211"/>
    </location>
</feature>
<feature type="repeat" description="LDL-receptor class B 3" evidence="2">
    <location>
        <begin position="212"/>
        <end position="257"/>
    </location>
</feature>
<feature type="domain" description="EGF-like 1" evidence="3">
    <location>
        <begin position="365"/>
        <end position="401"/>
    </location>
</feature>
<feature type="domain" description="EGF-like 2" evidence="3">
    <location>
        <begin position="436"/>
        <end position="473"/>
    </location>
</feature>
<feature type="glycosylation site" description="N-linked (GlcNAc...) asparagine" evidence="2">
    <location>
        <position position="80"/>
    </location>
</feature>
<feature type="glycosylation site" description="N-linked (GlcNAc...) asparagine" evidence="2">
    <location>
        <position position="106"/>
    </location>
</feature>
<feature type="glycosylation site" description="N-linked (GlcNAc...) asparagine" evidence="2">
    <location>
        <position position="175"/>
    </location>
</feature>
<feature type="glycosylation site" description="N-linked (GlcNAc...) asparagine" evidence="2">
    <location>
        <position position="316"/>
    </location>
</feature>
<feature type="glycosylation site" description="N-linked (GlcNAc...) asparagine" evidence="2">
    <location>
        <position position="475"/>
    </location>
</feature>
<feature type="disulfide bond" evidence="3">
    <location>
        <begin position="376"/>
        <end position="389"/>
    </location>
</feature>
<feature type="disulfide bond" evidence="3">
    <location>
        <begin position="391"/>
        <end position="400"/>
    </location>
</feature>
<feature type="disulfide bond" evidence="3">
    <location>
        <begin position="440"/>
        <end position="450"/>
    </location>
</feature>
<feature type="disulfide bond" evidence="3">
    <location>
        <begin position="444"/>
        <end position="461"/>
    </location>
</feature>
<feature type="disulfide bond" evidence="3">
    <location>
        <begin position="463"/>
        <end position="472"/>
    </location>
</feature>